<protein>
    <recommendedName>
        <fullName evidence="1">Histidine biosynthesis bifunctional protein HisIE</fullName>
    </recommendedName>
    <domain>
        <recommendedName>
            <fullName evidence="1">Phosphoribosyl-AMP cyclohydrolase</fullName>
            <shortName evidence="1">PRA-CH</shortName>
            <ecNumber evidence="1">3.5.4.19</ecNumber>
        </recommendedName>
    </domain>
    <domain>
        <recommendedName>
            <fullName evidence="1">Phosphoribosyl-ATP pyrophosphatase</fullName>
            <shortName evidence="1">PRA-PH</shortName>
            <ecNumber evidence="1">3.6.1.31</ecNumber>
        </recommendedName>
    </domain>
</protein>
<accession>Q7VD07</accession>
<reference key="1">
    <citation type="journal article" date="2003" name="Proc. Natl. Acad. Sci. U.S.A.">
        <title>Genome sequence of the cyanobacterium Prochlorococcus marinus SS120, a nearly minimal oxyphototrophic genome.</title>
        <authorList>
            <person name="Dufresne A."/>
            <person name="Salanoubat M."/>
            <person name="Partensky F."/>
            <person name="Artiguenave F."/>
            <person name="Axmann I.M."/>
            <person name="Barbe V."/>
            <person name="Duprat S."/>
            <person name="Galperin M.Y."/>
            <person name="Koonin E.V."/>
            <person name="Le Gall F."/>
            <person name="Makarova K.S."/>
            <person name="Ostrowski M."/>
            <person name="Oztas S."/>
            <person name="Robert C."/>
            <person name="Rogozin I.B."/>
            <person name="Scanlan D.J."/>
            <person name="Tandeau de Marsac N."/>
            <person name="Weissenbach J."/>
            <person name="Wincker P."/>
            <person name="Wolf Y.I."/>
            <person name="Hess W.R."/>
        </authorList>
    </citation>
    <scope>NUCLEOTIDE SEQUENCE [LARGE SCALE GENOMIC DNA]</scope>
    <source>
        <strain>SARG / CCMP1375 / SS120</strain>
    </source>
</reference>
<sequence>MMPMNQEFIQKLRFNEKGLIPAIAQDWLDGAILMMAWMNKESLEKTLITGEVHYWSRSREKLWHKGETSGHFQILKGIRFDCDSDVMLLSIEQVGSIACHTGARSCFFQEVEENIPDLEQNSTFNRPLSNTCSELFEVIKDRSSNPQKNSYTNSLLKDGDNKILKKIGEEGSEFVMACKDNDHESISNEAADLIFHIQVALKYHKVEWRDVLEVLAKRRQSKSNPK</sequence>
<organism>
    <name type="scientific">Prochlorococcus marinus (strain SARG / CCMP1375 / SS120)</name>
    <dbReference type="NCBI Taxonomy" id="167539"/>
    <lineage>
        <taxon>Bacteria</taxon>
        <taxon>Bacillati</taxon>
        <taxon>Cyanobacteriota</taxon>
        <taxon>Cyanophyceae</taxon>
        <taxon>Synechococcales</taxon>
        <taxon>Prochlorococcaceae</taxon>
        <taxon>Prochlorococcus</taxon>
    </lineage>
</organism>
<name>HIS2_PROMA</name>
<comment type="catalytic activity">
    <reaction evidence="1">
        <text>1-(5-phospho-beta-D-ribosyl)-ATP + H2O = 1-(5-phospho-beta-D-ribosyl)-5'-AMP + diphosphate + H(+)</text>
        <dbReference type="Rhea" id="RHEA:22828"/>
        <dbReference type="ChEBI" id="CHEBI:15377"/>
        <dbReference type="ChEBI" id="CHEBI:15378"/>
        <dbReference type="ChEBI" id="CHEBI:33019"/>
        <dbReference type="ChEBI" id="CHEBI:59457"/>
        <dbReference type="ChEBI" id="CHEBI:73183"/>
        <dbReference type="EC" id="3.6.1.31"/>
    </reaction>
</comment>
<comment type="catalytic activity">
    <reaction evidence="1">
        <text>1-(5-phospho-beta-D-ribosyl)-5'-AMP + H2O = 1-(5-phospho-beta-D-ribosyl)-5-[(5-phospho-beta-D-ribosylamino)methylideneamino]imidazole-4-carboxamide</text>
        <dbReference type="Rhea" id="RHEA:20049"/>
        <dbReference type="ChEBI" id="CHEBI:15377"/>
        <dbReference type="ChEBI" id="CHEBI:58435"/>
        <dbReference type="ChEBI" id="CHEBI:59457"/>
        <dbReference type="EC" id="3.5.4.19"/>
    </reaction>
</comment>
<comment type="pathway">
    <text evidence="1">Amino-acid biosynthesis; L-histidine biosynthesis; L-histidine from 5-phospho-alpha-D-ribose 1-diphosphate: step 2/9.</text>
</comment>
<comment type="pathway">
    <text evidence="1">Amino-acid biosynthesis; L-histidine biosynthesis; L-histidine from 5-phospho-alpha-D-ribose 1-diphosphate: step 3/9.</text>
</comment>
<comment type="subcellular location">
    <subcellularLocation>
        <location evidence="1">Cytoplasm</location>
    </subcellularLocation>
</comment>
<comment type="similarity">
    <text evidence="1">In the N-terminal section; belongs to the PRA-CH family.</text>
</comment>
<comment type="similarity">
    <text evidence="1">In the C-terminal section; belongs to the PRA-PH family.</text>
</comment>
<feature type="chain" id="PRO_0000136423" description="Histidine biosynthesis bifunctional protein HisIE">
    <location>
        <begin position="1"/>
        <end position="226"/>
    </location>
</feature>
<feature type="region of interest" description="Phosphoribosyl-AMP cyclohydrolase">
    <location>
        <begin position="1"/>
        <end position="131"/>
    </location>
</feature>
<feature type="region of interest" description="Phosphoribosyl-ATP pyrophosphohydrolase">
    <location>
        <begin position="132"/>
        <end position="226"/>
    </location>
</feature>
<gene>
    <name evidence="1" type="primary">hisI</name>
    <name evidence="1" type="synonym">hisIE</name>
    <name type="ordered locus">Pro_0582</name>
</gene>
<dbReference type="EC" id="3.5.4.19" evidence="1"/>
<dbReference type="EC" id="3.6.1.31" evidence="1"/>
<dbReference type="EMBL" id="AE017126">
    <property type="protein sequence ID" value="AAP99627.1"/>
    <property type="molecule type" value="Genomic_DNA"/>
</dbReference>
<dbReference type="RefSeq" id="NP_874975.1">
    <property type="nucleotide sequence ID" value="NC_005042.1"/>
</dbReference>
<dbReference type="RefSeq" id="WP_011124735.1">
    <property type="nucleotide sequence ID" value="NC_005042.1"/>
</dbReference>
<dbReference type="SMR" id="Q7VD07"/>
<dbReference type="STRING" id="167539.Pro_0582"/>
<dbReference type="EnsemblBacteria" id="AAP99627">
    <property type="protein sequence ID" value="AAP99627"/>
    <property type="gene ID" value="Pro_0582"/>
</dbReference>
<dbReference type="KEGG" id="pma:Pro_0582"/>
<dbReference type="PATRIC" id="fig|167539.5.peg.597"/>
<dbReference type="eggNOG" id="COG0139">
    <property type="taxonomic scope" value="Bacteria"/>
</dbReference>
<dbReference type="eggNOG" id="COG0140">
    <property type="taxonomic scope" value="Bacteria"/>
</dbReference>
<dbReference type="HOGENOM" id="CLU_048577_3_0_3"/>
<dbReference type="OrthoDB" id="9795769at2"/>
<dbReference type="UniPathway" id="UPA00031">
    <property type="reaction ID" value="UER00007"/>
</dbReference>
<dbReference type="UniPathway" id="UPA00031">
    <property type="reaction ID" value="UER00008"/>
</dbReference>
<dbReference type="Proteomes" id="UP000001420">
    <property type="component" value="Chromosome"/>
</dbReference>
<dbReference type="GO" id="GO:0005737">
    <property type="term" value="C:cytoplasm"/>
    <property type="evidence" value="ECO:0007669"/>
    <property type="project" value="UniProtKB-SubCell"/>
</dbReference>
<dbReference type="GO" id="GO:0005524">
    <property type="term" value="F:ATP binding"/>
    <property type="evidence" value="ECO:0007669"/>
    <property type="project" value="UniProtKB-KW"/>
</dbReference>
<dbReference type="GO" id="GO:0004635">
    <property type="term" value="F:phosphoribosyl-AMP cyclohydrolase activity"/>
    <property type="evidence" value="ECO:0007669"/>
    <property type="project" value="UniProtKB-UniRule"/>
</dbReference>
<dbReference type="GO" id="GO:0004636">
    <property type="term" value="F:phosphoribosyl-ATP diphosphatase activity"/>
    <property type="evidence" value="ECO:0007669"/>
    <property type="project" value="UniProtKB-UniRule"/>
</dbReference>
<dbReference type="GO" id="GO:0000105">
    <property type="term" value="P:L-histidine biosynthetic process"/>
    <property type="evidence" value="ECO:0007669"/>
    <property type="project" value="UniProtKB-UniRule"/>
</dbReference>
<dbReference type="CDD" id="cd11534">
    <property type="entry name" value="NTP-PPase_HisIE_like"/>
    <property type="match status" value="1"/>
</dbReference>
<dbReference type="FunFam" id="3.10.20.810:FF:000001">
    <property type="entry name" value="Histidine biosynthesis bifunctional protein HisIE"/>
    <property type="match status" value="1"/>
</dbReference>
<dbReference type="Gene3D" id="1.10.287.1080">
    <property type="entry name" value="MazG-like"/>
    <property type="match status" value="1"/>
</dbReference>
<dbReference type="Gene3D" id="3.10.20.810">
    <property type="entry name" value="Phosphoribosyl-AMP cyclohydrolase"/>
    <property type="match status" value="1"/>
</dbReference>
<dbReference type="HAMAP" id="MF_01020">
    <property type="entry name" value="HisE"/>
    <property type="match status" value="1"/>
</dbReference>
<dbReference type="HAMAP" id="MF_01021">
    <property type="entry name" value="HisI"/>
    <property type="match status" value="1"/>
</dbReference>
<dbReference type="HAMAP" id="MF_01019">
    <property type="entry name" value="HisIE"/>
    <property type="match status" value="1"/>
</dbReference>
<dbReference type="InterPro" id="IPR023019">
    <property type="entry name" value="His_synth_HisIE"/>
</dbReference>
<dbReference type="InterPro" id="IPR008179">
    <property type="entry name" value="HisE"/>
</dbReference>
<dbReference type="InterPro" id="IPR026660">
    <property type="entry name" value="PRA-CH"/>
</dbReference>
<dbReference type="InterPro" id="IPR021130">
    <property type="entry name" value="PRib-ATP_PPHydrolase-like"/>
</dbReference>
<dbReference type="InterPro" id="IPR002496">
    <property type="entry name" value="PRib_AMP_CycHydrolase_dom"/>
</dbReference>
<dbReference type="InterPro" id="IPR038019">
    <property type="entry name" value="PRib_AMP_CycHydrolase_sf"/>
</dbReference>
<dbReference type="NCBIfam" id="TIGR03188">
    <property type="entry name" value="histidine_hisI"/>
    <property type="match status" value="1"/>
</dbReference>
<dbReference type="NCBIfam" id="NF000768">
    <property type="entry name" value="PRK00051.1"/>
    <property type="match status" value="1"/>
</dbReference>
<dbReference type="NCBIfam" id="NF002747">
    <property type="entry name" value="PRK02759.1"/>
    <property type="match status" value="1"/>
</dbReference>
<dbReference type="PANTHER" id="PTHR42945">
    <property type="entry name" value="HISTIDINE BIOSYNTHESIS BIFUNCTIONAL PROTEIN"/>
    <property type="match status" value="1"/>
</dbReference>
<dbReference type="PANTHER" id="PTHR42945:SF1">
    <property type="entry name" value="HISTIDINE BIOSYNTHESIS BIFUNCTIONAL PROTEIN HIS7"/>
    <property type="match status" value="1"/>
</dbReference>
<dbReference type="Pfam" id="PF01502">
    <property type="entry name" value="PRA-CH"/>
    <property type="match status" value="1"/>
</dbReference>
<dbReference type="Pfam" id="PF01503">
    <property type="entry name" value="PRA-PH"/>
    <property type="match status" value="1"/>
</dbReference>
<dbReference type="SUPFAM" id="SSF101386">
    <property type="entry name" value="all-alpha NTP pyrophosphatases"/>
    <property type="match status" value="1"/>
</dbReference>
<dbReference type="SUPFAM" id="SSF141734">
    <property type="entry name" value="HisI-like"/>
    <property type="match status" value="1"/>
</dbReference>
<keyword id="KW-0028">Amino-acid biosynthesis</keyword>
<keyword id="KW-0067">ATP-binding</keyword>
<keyword id="KW-0963">Cytoplasm</keyword>
<keyword id="KW-0368">Histidine biosynthesis</keyword>
<keyword id="KW-0378">Hydrolase</keyword>
<keyword id="KW-0511">Multifunctional enzyme</keyword>
<keyword id="KW-0547">Nucleotide-binding</keyword>
<keyword id="KW-1185">Reference proteome</keyword>
<proteinExistence type="inferred from homology"/>
<evidence type="ECO:0000255" key="1">
    <source>
        <dbReference type="HAMAP-Rule" id="MF_01019"/>
    </source>
</evidence>